<accession>Q9NYF3</accession>
<accession>B2RDJ5</accession>
<accession>D3DQB9</accession>
<organism>
    <name type="scientific">Homo sapiens</name>
    <name type="common">Human</name>
    <dbReference type="NCBI Taxonomy" id="9606"/>
    <lineage>
        <taxon>Eukaryota</taxon>
        <taxon>Metazoa</taxon>
        <taxon>Chordata</taxon>
        <taxon>Craniata</taxon>
        <taxon>Vertebrata</taxon>
        <taxon>Euteleostomi</taxon>
        <taxon>Mammalia</taxon>
        <taxon>Eutheria</taxon>
        <taxon>Euarchontoglires</taxon>
        <taxon>Primates</taxon>
        <taxon>Haplorrhini</taxon>
        <taxon>Catarrhini</taxon>
        <taxon>Hominidae</taxon>
        <taxon>Homo</taxon>
    </lineage>
</organism>
<comment type="interaction">
    <interactant intactId="EBI-1644252">
        <id>Q9NYF3</id>
    </interactant>
    <interactant intactId="EBI-1053596">
        <id>Q13627</id>
        <label>DYRK1A</label>
    </interactant>
    <organismsDiffer>false</organismsDiffer>
    <experiments>5</experiments>
</comment>
<comment type="interaction">
    <interactant intactId="EBI-1644252">
        <id>Q9NYF3</id>
    </interactant>
    <interactant intactId="EBI-10190883">
        <id>V9HW98</id>
        <label>HEL2</label>
    </interactant>
    <organismsDiffer>false</organismsDiffer>
    <experiments>3</experiments>
</comment>
<comment type="interaction">
    <interactant intactId="EBI-1644252">
        <id>Q9NYF3</id>
    </interactant>
    <interactant intactId="EBI-16439278">
        <id>Q6FHY5</id>
        <label>MEOX2</label>
    </interactant>
    <organismsDiffer>false</organismsDiffer>
    <experiments>3</experiments>
</comment>
<comment type="interaction">
    <interactant intactId="EBI-1644252">
        <id>Q9NYF3</id>
    </interactant>
    <interactant intactId="EBI-713635">
        <id>O43639</id>
        <label>NCK2</label>
    </interactant>
    <organismsDiffer>false</organismsDiffer>
    <experiments>8</experiments>
</comment>
<comment type="interaction">
    <interactant intactId="EBI-1644252">
        <id>Q9NYF3</id>
    </interactant>
    <interactant intactId="EBI-476295">
        <id>P31947</id>
        <label>SFN</label>
    </interactant>
    <organismsDiffer>false</organismsDiffer>
    <experiments>3</experiments>
</comment>
<comment type="interaction">
    <interactant intactId="EBI-1644252">
        <id>Q9NYF3</id>
    </interactant>
    <interactant intactId="EBI-741237">
        <id>O60504</id>
        <label>SORBS3</label>
    </interactant>
    <organismsDiffer>false</organismsDiffer>
    <experiments>3</experiments>
</comment>
<comment type="interaction">
    <interactant intactId="EBI-1644252">
        <id>Q9NYF3</id>
    </interactant>
    <interactant intactId="EBI-359832">
        <id>P61981</id>
        <label>YWHAG</label>
    </interactant>
    <organismsDiffer>false</organismsDiffer>
    <experiments>9</experiments>
</comment>
<comment type="similarity">
    <text evidence="2">Belongs to the FAM53 family.</text>
</comment>
<evidence type="ECO:0000256" key="1">
    <source>
        <dbReference type="SAM" id="MobiDB-lite"/>
    </source>
</evidence>
<evidence type="ECO:0000305" key="2"/>
<evidence type="ECO:0000312" key="3">
    <source>
        <dbReference type="HGNC" id="HGNC:1336"/>
    </source>
</evidence>
<evidence type="ECO:0007744" key="4">
    <source>
    </source>
</evidence>
<evidence type="ECO:0007744" key="5">
    <source>
    </source>
</evidence>
<evidence type="ECO:0007744" key="6">
    <source>
    </source>
</evidence>
<evidence type="ECO:0007744" key="7">
    <source>
    </source>
</evidence>
<evidence type="ECO:0007744" key="8">
    <source>
    </source>
</evidence>
<keyword id="KW-0007">Acetylation</keyword>
<keyword id="KW-0597">Phosphoprotein</keyword>
<keyword id="KW-1267">Proteomics identification</keyword>
<keyword id="KW-1185">Reference proteome</keyword>
<dbReference type="EMBL" id="AF251040">
    <property type="protein sequence ID" value="AAF63766.1"/>
    <property type="molecule type" value="mRNA"/>
</dbReference>
<dbReference type="EMBL" id="AK315567">
    <property type="protein sequence ID" value="BAG37942.1"/>
    <property type="molecule type" value="mRNA"/>
</dbReference>
<dbReference type="EMBL" id="CH471062">
    <property type="protein sequence ID" value="EAW62143.1"/>
    <property type="molecule type" value="Genomic_DNA"/>
</dbReference>
<dbReference type="EMBL" id="CH471062">
    <property type="protein sequence ID" value="EAW62144.1"/>
    <property type="molecule type" value="Genomic_DNA"/>
</dbReference>
<dbReference type="EMBL" id="BC000259">
    <property type="protein sequence ID" value="AAH00259.1"/>
    <property type="molecule type" value="mRNA"/>
</dbReference>
<dbReference type="EMBL" id="BC052993">
    <property type="protein sequence ID" value="AAH52993.1"/>
    <property type="molecule type" value="mRNA"/>
</dbReference>
<dbReference type="CCDS" id="CCDS4204.1"/>
<dbReference type="RefSeq" id="NP_001129119.1">
    <property type="nucleotide sequence ID" value="NM_001135647.2"/>
</dbReference>
<dbReference type="RefSeq" id="NP_057689.1">
    <property type="nucleotide sequence ID" value="NM_016605.3"/>
</dbReference>
<dbReference type="BioGRID" id="119458">
    <property type="interactions" value="71"/>
</dbReference>
<dbReference type="FunCoup" id="Q9NYF3">
    <property type="interactions" value="1660"/>
</dbReference>
<dbReference type="IntAct" id="Q9NYF3">
    <property type="interactions" value="26"/>
</dbReference>
<dbReference type="MINT" id="Q9NYF3"/>
<dbReference type="STRING" id="9606.ENSP00000239906"/>
<dbReference type="GlyGen" id="Q9NYF3">
    <property type="glycosylation" value="1 site, 1 O-linked glycan (1 site)"/>
</dbReference>
<dbReference type="iPTMnet" id="Q9NYF3"/>
<dbReference type="PhosphoSitePlus" id="Q9NYF3"/>
<dbReference type="BioMuta" id="FAM53C"/>
<dbReference type="DMDM" id="66774134"/>
<dbReference type="jPOST" id="Q9NYF3"/>
<dbReference type="MassIVE" id="Q9NYF3"/>
<dbReference type="PaxDb" id="9606-ENSP00000239906"/>
<dbReference type="PeptideAtlas" id="Q9NYF3"/>
<dbReference type="ProteomicsDB" id="83218"/>
<dbReference type="Pumba" id="Q9NYF3"/>
<dbReference type="Antibodypedia" id="45322">
    <property type="antibodies" value="48 antibodies from 14 providers"/>
</dbReference>
<dbReference type="CPTC" id="Q9NYF3">
    <property type="antibodies" value="1 antibody"/>
</dbReference>
<dbReference type="DNASU" id="51307"/>
<dbReference type="Ensembl" id="ENST00000239906.10">
    <property type="protein sequence ID" value="ENSP00000239906.5"/>
    <property type="gene ID" value="ENSG00000120709.11"/>
</dbReference>
<dbReference type="Ensembl" id="ENST00000434981.6">
    <property type="protein sequence ID" value="ENSP00000403705.2"/>
    <property type="gene ID" value="ENSG00000120709.11"/>
</dbReference>
<dbReference type="GeneID" id="51307"/>
<dbReference type="KEGG" id="hsa:51307"/>
<dbReference type="MANE-Select" id="ENST00000239906.10">
    <property type="protein sequence ID" value="ENSP00000239906.5"/>
    <property type="RefSeq nucleotide sequence ID" value="NM_016605.3"/>
    <property type="RefSeq protein sequence ID" value="NP_057689.1"/>
</dbReference>
<dbReference type="UCSC" id="uc003lcv.4">
    <property type="organism name" value="human"/>
</dbReference>
<dbReference type="AGR" id="HGNC:1336"/>
<dbReference type="CTD" id="51307"/>
<dbReference type="DisGeNET" id="51307"/>
<dbReference type="GeneCards" id="FAM53C"/>
<dbReference type="HGNC" id="HGNC:1336">
    <property type="gene designation" value="FAM53C"/>
</dbReference>
<dbReference type="HPA" id="ENSG00000120709">
    <property type="expression patterns" value="Tissue enhanced (bone)"/>
</dbReference>
<dbReference type="MIM" id="609372">
    <property type="type" value="gene"/>
</dbReference>
<dbReference type="neXtProt" id="NX_Q9NYF3"/>
<dbReference type="OpenTargets" id="ENSG00000120709"/>
<dbReference type="PharmGKB" id="PA25917"/>
<dbReference type="VEuPathDB" id="HostDB:ENSG00000120709"/>
<dbReference type="eggNOG" id="ENOG502RW5C">
    <property type="taxonomic scope" value="Eukaryota"/>
</dbReference>
<dbReference type="GeneTree" id="ENSGT00530000063371"/>
<dbReference type="HOGENOM" id="CLU_054215_1_0_1"/>
<dbReference type="InParanoid" id="Q9NYF3"/>
<dbReference type="OMA" id="KVWTPIK"/>
<dbReference type="OrthoDB" id="10026856at2759"/>
<dbReference type="PAN-GO" id="Q9NYF3">
    <property type="GO annotations" value="2 GO annotations based on evolutionary models"/>
</dbReference>
<dbReference type="PhylomeDB" id="Q9NYF3"/>
<dbReference type="TreeFam" id="TF332095"/>
<dbReference type="PathwayCommons" id="Q9NYF3"/>
<dbReference type="SignaLink" id="Q9NYF3"/>
<dbReference type="BioGRID-ORCS" id="51307">
    <property type="hits" value="8 hits in 1163 CRISPR screens"/>
</dbReference>
<dbReference type="ChiTaRS" id="FAM53C">
    <property type="organism name" value="human"/>
</dbReference>
<dbReference type="GenomeRNAi" id="51307"/>
<dbReference type="Pharos" id="Q9NYF3">
    <property type="development level" value="Tdark"/>
</dbReference>
<dbReference type="PRO" id="PR:Q9NYF3"/>
<dbReference type="Proteomes" id="UP000005640">
    <property type="component" value="Chromosome 5"/>
</dbReference>
<dbReference type="RNAct" id="Q9NYF3">
    <property type="molecule type" value="protein"/>
</dbReference>
<dbReference type="Bgee" id="ENSG00000120709">
    <property type="expression patterns" value="Expressed in left testis and 204 other cell types or tissues"/>
</dbReference>
<dbReference type="ExpressionAtlas" id="Q9NYF3">
    <property type="expression patterns" value="baseline and differential"/>
</dbReference>
<dbReference type="GO" id="GO:0005634">
    <property type="term" value="C:nucleus"/>
    <property type="evidence" value="ECO:0000318"/>
    <property type="project" value="GO_Central"/>
</dbReference>
<dbReference type="GO" id="GO:0006606">
    <property type="term" value="P:protein import into nucleus"/>
    <property type="evidence" value="ECO:0000318"/>
    <property type="project" value="GO_Central"/>
</dbReference>
<dbReference type="InterPro" id="IPR029356">
    <property type="entry name" value="FAM53"/>
</dbReference>
<dbReference type="PANTHER" id="PTHR28567">
    <property type="entry name" value="PROTEIN FAM53A-LIKE ISOFORM X1"/>
    <property type="match status" value="1"/>
</dbReference>
<dbReference type="PANTHER" id="PTHR28567:SF4">
    <property type="entry name" value="PROTEIN FAM53C"/>
    <property type="match status" value="1"/>
</dbReference>
<dbReference type="Pfam" id="PF15242">
    <property type="entry name" value="FAM53"/>
    <property type="match status" value="1"/>
</dbReference>
<feature type="chain" id="PRO_0000189546" description="Protein FAM53C">
    <location>
        <begin position="1"/>
        <end position="392"/>
    </location>
</feature>
<feature type="region of interest" description="Disordered" evidence="1">
    <location>
        <begin position="78"/>
        <end position="119"/>
    </location>
</feature>
<feature type="region of interest" description="Disordered" evidence="1">
    <location>
        <begin position="141"/>
        <end position="167"/>
    </location>
</feature>
<feature type="region of interest" description="Disordered" evidence="1">
    <location>
        <begin position="204"/>
        <end position="294"/>
    </location>
</feature>
<feature type="region of interest" description="Disordered" evidence="1">
    <location>
        <begin position="341"/>
        <end position="364"/>
    </location>
</feature>
<feature type="compositionally biased region" description="Polar residues" evidence="1">
    <location>
        <begin position="83"/>
        <end position="93"/>
    </location>
</feature>
<feature type="compositionally biased region" description="Low complexity" evidence="1">
    <location>
        <begin position="241"/>
        <end position="256"/>
    </location>
</feature>
<feature type="compositionally biased region" description="Basic and acidic residues" evidence="1">
    <location>
        <begin position="278"/>
        <end position="294"/>
    </location>
</feature>
<feature type="modified residue" description="N-acetylmethionine" evidence="7">
    <location>
        <position position="1"/>
    </location>
</feature>
<feature type="modified residue" description="Phosphoserine" evidence="4 8">
    <location>
        <position position="122"/>
    </location>
</feature>
<feature type="modified residue" description="Phosphoserine" evidence="8">
    <location>
        <position position="162"/>
    </location>
</feature>
<feature type="modified residue" description="Phosphoserine" evidence="4 6 8">
    <location>
        <position position="232"/>
    </location>
</feature>
<feature type="modified residue" description="Phosphoserine" evidence="4 5 6 8">
    <location>
        <position position="234"/>
    </location>
</feature>
<feature type="modified residue" description="Phosphoserine" evidence="4 8">
    <location>
        <position position="255"/>
    </location>
</feature>
<feature type="modified residue" description="Phosphoserine" evidence="8">
    <location>
        <position position="273"/>
    </location>
</feature>
<feature type="modified residue" description="Phosphoserine" evidence="8">
    <location>
        <position position="299"/>
    </location>
</feature>
<feature type="sequence variant" id="VAR_053089" description="In dbSNP:rs35360938.">
    <original>R</original>
    <variation>C</variation>
    <location>
        <position position="21"/>
    </location>
</feature>
<sequence>MITLITEQLQKQTLDELKCTRFSISLPLPDHADISNCGNSFQLVSEGASWRGLPHCSCAEFQDSLNFSYHPSGLSLHLRPPSRGNSPKEQPFSQVLRPEPPDPEKLPVPPAPPSKRHCRSLSVPVDLSRWQPVWRPAPSKLWTPIKHRGSGGGGGPQVPHQSPPKRVSSLRFLQAPSASSQCAPAHRPYSPPFFSLALAQDSSRPCAASPQSGSWESDAESLSPCPPQRRFSLSPSLGPQASRFLPSARSSPASSPELPWRPRGLRNLPRSRSQPCDLDARKTGVKRRHEEDPRRLRPSLDFDKMNQKPYSGGLCLQETAREGSSISPPWFMACSPPPLSASCSPTGGSSQVLSESEEEEEGAVRWGRQALSKRTLCQRDFGDLDLNLIEEN</sequence>
<proteinExistence type="evidence at protein level"/>
<gene>
    <name evidence="3" type="primary">FAM53C</name>
    <name evidence="3" type="synonym">C5orf6</name>
</gene>
<protein>
    <recommendedName>
        <fullName evidence="2">Protein FAM53C</fullName>
    </recommendedName>
</protein>
<reference key="1">
    <citation type="journal article" date="2000" name="Genomics">
        <title>cDNA cloning and genomic structure of three genes localized to human chromosome band 5q31 encoding potential nuclear proteins.</title>
        <authorList>
            <person name="Lai F."/>
            <person name="Godley L.A."/>
            <person name="Fernald A.A."/>
            <person name="Orelli B.J."/>
            <person name="Pamintuan L."/>
            <person name="Zhao N."/>
            <person name="Le Beau M.M."/>
        </authorList>
    </citation>
    <scope>NUCLEOTIDE SEQUENCE [MRNA]</scope>
</reference>
<reference key="2">
    <citation type="journal article" date="2004" name="Nat. Genet.">
        <title>Complete sequencing and characterization of 21,243 full-length human cDNAs.</title>
        <authorList>
            <person name="Ota T."/>
            <person name="Suzuki Y."/>
            <person name="Nishikawa T."/>
            <person name="Otsuki T."/>
            <person name="Sugiyama T."/>
            <person name="Irie R."/>
            <person name="Wakamatsu A."/>
            <person name="Hayashi K."/>
            <person name="Sato H."/>
            <person name="Nagai K."/>
            <person name="Kimura K."/>
            <person name="Makita H."/>
            <person name="Sekine M."/>
            <person name="Obayashi M."/>
            <person name="Nishi T."/>
            <person name="Shibahara T."/>
            <person name="Tanaka T."/>
            <person name="Ishii S."/>
            <person name="Yamamoto J."/>
            <person name="Saito K."/>
            <person name="Kawai Y."/>
            <person name="Isono Y."/>
            <person name="Nakamura Y."/>
            <person name="Nagahari K."/>
            <person name="Murakami K."/>
            <person name="Yasuda T."/>
            <person name="Iwayanagi T."/>
            <person name="Wagatsuma M."/>
            <person name="Shiratori A."/>
            <person name="Sudo H."/>
            <person name="Hosoiri T."/>
            <person name="Kaku Y."/>
            <person name="Kodaira H."/>
            <person name="Kondo H."/>
            <person name="Sugawara M."/>
            <person name="Takahashi M."/>
            <person name="Kanda K."/>
            <person name="Yokoi T."/>
            <person name="Furuya T."/>
            <person name="Kikkawa E."/>
            <person name="Omura Y."/>
            <person name="Abe K."/>
            <person name="Kamihara K."/>
            <person name="Katsuta N."/>
            <person name="Sato K."/>
            <person name="Tanikawa M."/>
            <person name="Yamazaki M."/>
            <person name="Ninomiya K."/>
            <person name="Ishibashi T."/>
            <person name="Yamashita H."/>
            <person name="Murakawa K."/>
            <person name="Fujimori K."/>
            <person name="Tanai H."/>
            <person name="Kimata M."/>
            <person name="Watanabe M."/>
            <person name="Hiraoka S."/>
            <person name="Chiba Y."/>
            <person name="Ishida S."/>
            <person name="Ono Y."/>
            <person name="Takiguchi S."/>
            <person name="Watanabe S."/>
            <person name="Yosida M."/>
            <person name="Hotuta T."/>
            <person name="Kusano J."/>
            <person name="Kanehori K."/>
            <person name="Takahashi-Fujii A."/>
            <person name="Hara H."/>
            <person name="Tanase T.-O."/>
            <person name="Nomura Y."/>
            <person name="Togiya S."/>
            <person name="Komai F."/>
            <person name="Hara R."/>
            <person name="Takeuchi K."/>
            <person name="Arita M."/>
            <person name="Imose N."/>
            <person name="Musashino K."/>
            <person name="Yuuki H."/>
            <person name="Oshima A."/>
            <person name="Sasaki N."/>
            <person name="Aotsuka S."/>
            <person name="Yoshikawa Y."/>
            <person name="Matsunawa H."/>
            <person name="Ichihara T."/>
            <person name="Shiohata N."/>
            <person name="Sano S."/>
            <person name="Moriya S."/>
            <person name="Momiyama H."/>
            <person name="Satoh N."/>
            <person name="Takami S."/>
            <person name="Terashima Y."/>
            <person name="Suzuki O."/>
            <person name="Nakagawa S."/>
            <person name="Senoh A."/>
            <person name="Mizoguchi H."/>
            <person name="Goto Y."/>
            <person name="Shimizu F."/>
            <person name="Wakebe H."/>
            <person name="Hishigaki H."/>
            <person name="Watanabe T."/>
            <person name="Sugiyama A."/>
            <person name="Takemoto M."/>
            <person name="Kawakami B."/>
            <person name="Yamazaki M."/>
            <person name="Watanabe K."/>
            <person name="Kumagai A."/>
            <person name="Itakura S."/>
            <person name="Fukuzumi Y."/>
            <person name="Fujimori Y."/>
            <person name="Komiyama M."/>
            <person name="Tashiro H."/>
            <person name="Tanigami A."/>
            <person name="Fujiwara T."/>
            <person name="Ono T."/>
            <person name="Yamada K."/>
            <person name="Fujii Y."/>
            <person name="Ozaki K."/>
            <person name="Hirao M."/>
            <person name="Ohmori Y."/>
            <person name="Kawabata A."/>
            <person name="Hikiji T."/>
            <person name="Kobatake N."/>
            <person name="Inagaki H."/>
            <person name="Ikema Y."/>
            <person name="Okamoto S."/>
            <person name="Okitani R."/>
            <person name="Kawakami T."/>
            <person name="Noguchi S."/>
            <person name="Itoh T."/>
            <person name="Shigeta K."/>
            <person name="Senba T."/>
            <person name="Matsumura K."/>
            <person name="Nakajima Y."/>
            <person name="Mizuno T."/>
            <person name="Morinaga M."/>
            <person name="Sasaki M."/>
            <person name="Togashi T."/>
            <person name="Oyama M."/>
            <person name="Hata H."/>
            <person name="Watanabe M."/>
            <person name="Komatsu T."/>
            <person name="Mizushima-Sugano J."/>
            <person name="Satoh T."/>
            <person name="Shirai Y."/>
            <person name="Takahashi Y."/>
            <person name="Nakagawa K."/>
            <person name="Okumura K."/>
            <person name="Nagase T."/>
            <person name="Nomura N."/>
            <person name="Kikuchi H."/>
            <person name="Masuho Y."/>
            <person name="Yamashita R."/>
            <person name="Nakai K."/>
            <person name="Yada T."/>
            <person name="Nakamura Y."/>
            <person name="Ohara O."/>
            <person name="Isogai T."/>
            <person name="Sugano S."/>
        </authorList>
    </citation>
    <scope>NUCLEOTIDE SEQUENCE [LARGE SCALE MRNA]</scope>
    <source>
        <tissue>Placenta</tissue>
    </source>
</reference>
<reference key="3">
    <citation type="submission" date="2005-09" db="EMBL/GenBank/DDBJ databases">
        <authorList>
            <person name="Mural R.J."/>
            <person name="Istrail S."/>
            <person name="Sutton G.G."/>
            <person name="Florea L."/>
            <person name="Halpern A.L."/>
            <person name="Mobarry C.M."/>
            <person name="Lippert R."/>
            <person name="Walenz B."/>
            <person name="Shatkay H."/>
            <person name="Dew I."/>
            <person name="Miller J.R."/>
            <person name="Flanigan M.J."/>
            <person name="Edwards N.J."/>
            <person name="Bolanos R."/>
            <person name="Fasulo D."/>
            <person name="Halldorsson B.V."/>
            <person name="Hannenhalli S."/>
            <person name="Turner R."/>
            <person name="Yooseph S."/>
            <person name="Lu F."/>
            <person name="Nusskern D.R."/>
            <person name="Shue B.C."/>
            <person name="Zheng X.H."/>
            <person name="Zhong F."/>
            <person name="Delcher A.L."/>
            <person name="Huson D.H."/>
            <person name="Kravitz S.A."/>
            <person name="Mouchard L."/>
            <person name="Reinert K."/>
            <person name="Remington K.A."/>
            <person name="Clark A.G."/>
            <person name="Waterman M.S."/>
            <person name="Eichler E.E."/>
            <person name="Adams M.D."/>
            <person name="Hunkapiller M.W."/>
            <person name="Myers E.W."/>
            <person name="Venter J.C."/>
        </authorList>
    </citation>
    <scope>NUCLEOTIDE SEQUENCE [LARGE SCALE GENOMIC DNA]</scope>
</reference>
<reference key="4">
    <citation type="journal article" date="2004" name="Genome Res.">
        <title>The status, quality, and expansion of the NIH full-length cDNA project: the Mammalian Gene Collection (MGC).</title>
        <authorList>
            <consortium name="The MGC Project Team"/>
        </authorList>
    </citation>
    <scope>NUCLEOTIDE SEQUENCE [LARGE SCALE MRNA]</scope>
    <source>
        <tissue>Brain</tissue>
        <tissue>Eye</tissue>
    </source>
</reference>
<reference key="5">
    <citation type="journal article" date="2008" name="J. Proteome Res.">
        <title>Combining protein-based IMAC, peptide-based IMAC, and MudPIT for efficient phosphoproteomic analysis.</title>
        <authorList>
            <person name="Cantin G.T."/>
            <person name="Yi W."/>
            <person name="Lu B."/>
            <person name="Park S.K."/>
            <person name="Xu T."/>
            <person name="Lee J.-D."/>
            <person name="Yates J.R. III"/>
        </authorList>
    </citation>
    <scope>IDENTIFICATION BY MASS SPECTROMETRY [LARGE SCALE ANALYSIS]</scope>
    <source>
        <tissue>Cervix carcinoma</tissue>
    </source>
</reference>
<reference key="6">
    <citation type="journal article" date="2008" name="Proc. Natl. Acad. Sci. U.S.A.">
        <title>A quantitative atlas of mitotic phosphorylation.</title>
        <authorList>
            <person name="Dephoure N."/>
            <person name="Zhou C."/>
            <person name="Villen J."/>
            <person name="Beausoleil S.A."/>
            <person name="Bakalarski C.E."/>
            <person name="Elledge S.J."/>
            <person name="Gygi S.P."/>
        </authorList>
    </citation>
    <scope>PHOSPHORYLATION [LARGE SCALE ANALYSIS] AT SER-122; SER-232; SER-234 AND SER-255</scope>
    <scope>IDENTIFICATION BY MASS SPECTROMETRY [LARGE SCALE ANALYSIS]</scope>
    <source>
        <tissue>Cervix carcinoma</tissue>
    </source>
</reference>
<reference key="7">
    <citation type="journal article" date="2009" name="Sci. Signal.">
        <title>Quantitative phosphoproteomic analysis of T cell receptor signaling reveals system-wide modulation of protein-protein interactions.</title>
        <authorList>
            <person name="Mayya V."/>
            <person name="Lundgren D.H."/>
            <person name="Hwang S.-I."/>
            <person name="Rezaul K."/>
            <person name="Wu L."/>
            <person name="Eng J.K."/>
            <person name="Rodionov V."/>
            <person name="Han D.K."/>
        </authorList>
    </citation>
    <scope>PHOSPHORYLATION [LARGE SCALE ANALYSIS] AT SER-234</scope>
    <scope>IDENTIFICATION BY MASS SPECTROMETRY [LARGE SCALE ANALYSIS]</scope>
    <source>
        <tissue>Leukemic T-cell</tissue>
    </source>
</reference>
<reference key="8">
    <citation type="journal article" date="2010" name="Sci. Signal.">
        <title>Quantitative phosphoproteomics reveals widespread full phosphorylation site occupancy during mitosis.</title>
        <authorList>
            <person name="Olsen J.V."/>
            <person name="Vermeulen M."/>
            <person name="Santamaria A."/>
            <person name="Kumar C."/>
            <person name="Miller M.L."/>
            <person name="Jensen L.J."/>
            <person name="Gnad F."/>
            <person name="Cox J."/>
            <person name="Jensen T.S."/>
            <person name="Nigg E.A."/>
            <person name="Brunak S."/>
            <person name="Mann M."/>
        </authorList>
    </citation>
    <scope>PHOSPHORYLATION [LARGE SCALE ANALYSIS] AT SER-232 AND SER-234</scope>
    <scope>IDENTIFICATION BY MASS SPECTROMETRY [LARGE SCALE ANALYSIS]</scope>
    <source>
        <tissue>Cervix carcinoma</tissue>
    </source>
</reference>
<reference key="9">
    <citation type="journal article" date="2012" name="Mol. Cell. Proteomics">
        <title>Comparative large-scale characterisation of plant vs. mammal proteins reveals similar and idiosyncratic N-alpha acetylation features.</title>
        <authorList>
            <person name="Bienvenut W.V."/>
            <person name="Sumpton D."/>
            <person name="Martinez A."/>
            <person name="Lilla S."/>
            <person name="Espagne C."/>
            <person name="Meinnel T."/>
            <person name="Giglione C."/>
        </authorList>
    </citation>
    <scope>ACETYLATION [LARGE SCALE ANALYSIS] AT MET-1</scope>
    <scope>IDENTIFICATION BY MASS SPECTROMETRY [LARGE SCALE ANALYSIS]</scope>
</reference>
<reference key="10">
    <citation type="journal article" date="2013" name="J. Proteome Res.">
        <title>Toward a comprehensive characterization of a human cancer cell phosphoproteome.</title>
        <authorList>
            <person name="Zhou H."/>
            <person name="Di Palma S."/>
            <person name="Preisinger C."/>
            <person name="Peng M."/>
            <person name="Polat A.N."/>
            <person name="Heck A.J."/>
            <person name="Mohammed S."/>
        </authorList>
    </citation>
    <scope>PHOSPHORYLATION [LARGE SCALE ANALYSIS] AT SER-122; SER-162; SER-232; SER-234; SER-255; SER-273 AND SER-299</scope>
    <scope>IDENTIFICATION BY MASS SPECTROMETRY [LARGE SCALE ANALYSIS]</scope>
    <source>
        <tissue>Cervix carcinoma</tissue>
        <tissue>Erythroleukemia</tissue>
    </source>
</reference>
<reference key="11">
    <citation type="journal article" date="2014" name="J. Proteomics">
        <title>An enzyme assisted RP-RPLC approach for in-depth analysis of human liver phosphoproteome.</title>
        <authorList>
            <person name="Bian Y."/>
            <person name="Song C."/>
            <person name="Cheng K."/>
            <person name="Dong M."/>
            <person name="Wang F."/>
            <person name="Huang J."/>
            <person name="Sun D."/>
            <person name="Wang L."/>
            <person name="Ye M."/>
            <person name="Zou H."/>
        </authorList>
    </citation>
    <scope>IDENTIFICATION BY MASS SPECTROMETRY [LARGE SCALE ANALYSIS]</scope>
    <source>
        <tissue>Liver</tissue>
    </source>
</reference>
<name>FA53C_HUMAN</name>